<gene>
    <name evidence="1" type="primary">rplF</name>
    <name type="ordered locus">SERP1816</name>
</gene>
<feature type="chain" id="PRO_0000223990" description="Large ribosomal subunit protein uL6">
    <location>
        <begin position="1"/>
        <end position="178"/>
    </location>
</feature>
<comment type="function">
    <text evidence="1">This protein binds to the 23S rRNA, and is important in its secondary structure. It is located near the subunit interface in the base of the L7/L12 stalk, and near the tRNA binding site of the peptidyltransferase center.</text>
</comment>
<comment type="subunit">
    <text evidence="1">Part of the 50S ribosomal subunit.</text>
</comment>
<comment type="similarity">
    <text evidence="1">Belongs to the universal ribosomal protein uL6 family.</text>
</comment>
<name>RL6_STAEQ</name>
<keyword id="KW-1185">Reference proteome</keyword>
<keyword id="KW-0687">Ribonucleoprotein</keyword>
<keyword id="KW-0689">Ribosomal protein</keyword>
<keyword id="KW-0694">RNA-binding</keyword>
<keyword id="KW-0699">rRNA-binding</keyword>
<dbReference type="EMBL" id="CP000029">
    <property type="protein sequence ID" value="AAW55140.1"/>
    <property type="molecule type" value="Genomic_DNA"/>
</dbReference>
<dbReference type="RefSeq" id="WP_001829740.1">
    <property type="nucleotide sequence ID" value="NC_002976.3"/>
</dbReference>
<dbReference type="SMR" id="Q5HM14"/>
<dbReference type="STRING" id="176279.SERP1816"/>
<dbReference type="GeneID" id="50018088"/>
<dbReference type="KEGG" id="ser:SERP1816"/>
<dbReference type="eggNOG" id="COG0097">
    <property type="taxonomic scope" value="Bacteria"/>
</dbReference>
<dbReference type="HOGENOM" id="CLU_065464_1_2_9"/>
<dbReference type="Proteomes" id="UP000000531">
    <property type="component" value="Chromosome"/>
</dbReference>
<dbReference type="GO" id="GO:0022625">
    <property type="term" value="C:cytosolic large ribosomal subunit"/>
    <property type="evidence" value="ECO:0007669"/>
    <property type="project" value="TreeGrafter"/>
</dbReference>
<dbReference type="GO" id="GO:0019843">
    <property type="term" value="F:rRNA binding"/>
    <property type="evidence" value="ECO:0007669"/>
    <property type="project" value="UniProtKB-UniRule"/>
</dbReference>
<dbReference type="GO" id="GO:0003735">
    <property type="term" value="F:structural constituent of ribosome"/>
    <property type="evidence" value="ECO:0007669"/>
    <property type="project" value="InterPro"/>
</dbReference>
<dbReference type="GO" id="GO:0002181">
    <property type="term" value="P:cytoplasmic translation"/>
    <property type="evidence" value="ECO:0007669"/>
    <property type="project" value="TreeGrafter"/>
</dbReference>
<dbReference type="FunFam" id="3.90.930.12:FF:000001">
    <property type="entry name" value="50S ribosomal protein L6"/>
    <property type="match status" value="1"/>
</dbReference>
<dbReference type="FunFam" id="3.90.930.12:FF:000002">
    <property type="entry name" value="50S ribosomal protein L6"/>
    <property type="match status" value="1"/>
</dbReference>
<dbReference type="Gene3D" id="3.90.930.12">
    <property type="entry name" value="Ribosomal protein L6, alpha-beta domain"/>
    <property type="match status" value="2"/>
</dbReference>
<dbReference type="HAMAP" id="MF_01365_B">
    <property type="entry name" value="Ribosomal_uL6_B"/>
    <property type="match status" value="1"/>
</dbReference>
<dbReference type="InterPro" id="IPR000702">
    <property type="entry name" value="Ribosomal_uL6-like"/>
</dbReference>
<dbReference type="InterPro" id="IPR036789">
    <property type="entry name" value="Ribosomal_uL6-like_a/b-dom_sf"/>
</dbReference>
<dbReference type="InterPro" id="IPR020040">
    <property type="entry name" value="Ribosomal_uL6_a/b-dom"/>
</dbReference>
<dbReference type="InterPro" id="IPR019906">
    <property type="entry name" value="Ribosomal_uL6_bac-type"/>
</dbReference>
<dbReference type="InterPro" id="IPR002358">
    <property type="entry name" value="Ribosomal_uL6_CS"/>
</dbReference>
<dbReference type="NCBIfam" id="TIGR03654">
    <property type="entry name" value="L6_bact"/>
    <property type="match status" value="1"/>
</dbReference>
<dbReference type="PANTHER" id="PTHR11655">
    <property type="entry name" value="60S/50S RIBOSOMAL PROTEIN L6/L9"/>
    <property type="match status" value="1"/>
</dbReference>
<dbReference type="PANTHER" id="PTHR11655:SF14">
    <property type="entry name" value="LARGE RIBOSOMAL SUBUNIT PROTEIN UL6M"/>
    <property type="match status" value="1"/>
</dbReference>
<dbReference type="Pfam" id="PF00347">
    <property type="entry name" value="Ribosomal_L6"/>
    <property type="match status" value="2"/>
</dbReference>
<dbReference type="PIRSF" id="PIRSF002162">
    <property type="entry name" value="Ribosomal_L6"/>
    <property type="match status" value="1"/>
</dbReference>
<dbReference type="PRINTS" id="PR00059">
    <property type="entry name" value="RIBOSOMALL6"/>
</dbReference>
<dbReference type="SUPFAM" id="SSF56053">
    <property type="entry name" value="Ribosomal protein L6"/>
    <property type="match status" value="2"/>
</dbReference>
<dbReference type="PROSITE" id="PS00525">
    <property type="entry name" value="RIBOSOMAL_L6_1"/>
    <property type="match status" value="1"/>
</dbReference>
<proteinExistence type="inferred from homology"/>
<organism>
    <name type="scientific">Staphylococcus epidermidis (strain ATCC 35984 / DSM 28319 / BCRC 17069 / CCUG 31568 / BM 3577 / RP62A)</name>
    <dbReference type="NCBI Taxonomy" id="176279"/>
    <lineage>
        <taxon>Bacteria</taxon>
        <taxon>Bacillati</taxon>
        <taxon>Bacillota</taxon>
        <taxon>Bacilli</taxon>
        <taxon>Bacillales</taxon>
        <taxon>Staphylococcaceae</taxon>
        <taxon>Staphylococcus</taxon>
    </lineage>
</organism>
<accession>Q5HM14</accession>
<sequence length="178" mass="19664">MSRVGKKIIDIPSDVTVTFDGSHVTVKGPKGELERTLNERMTFKQEENTVEVVRPSDSKEDRTDHGTTRALLNNMVLGVSQGYEKTLELVGVGYRAQMQGKDLVLNVGYSHPVEIKAEEGITFAVEKNTTVKVSGVSKEQVGAIASNIRSVRPPEPYKGKGIRYQGEYVRRKEGKTGK</sequence>
<evidence type="ECO:0000255" key="1">
    <source>
        <dbReference type="HAMAP-Rule" id="MF_01365"/>
    </source>
</evidence>
<evidence type="ECO:0000305" key="2"/>
<reference key="1">
    <citation type="journal article" date="2005" name="J. Bacteriol.">
        <title>Insights on evolution of virulence and resistance from the complete genome analysis of an early methicillin-resistant Staphylococcus aureus strain and a biofilm-producing methicillin-resistant Staphylococcus epidermidis strain.</title>
        <authorList>
            <person name="Gill S.R."/>
            <person name="Fouts D.E."/>
            <person name="Archer G.L."/>
            <person name="Mongodin E.F."/>
            <person name="DeBoy R.T."/>
            <person name="Ravel J."/>
            <person name="Paulsen I.T."/>
            <person name="Kolonay J.F."/>
            <person name="Brinkac L.M."/>
            <person name="Beanan M.J."/>
            <person name="Dodson R.J."/>
            <person name="Daugherty S.C."/>
            <person name="Madupu R."/>
            <person name="Angiuoli S.V."/>
            <person name="Durkin A.S."/>
            <person name="Haft D.H."/>
            <person name="Vamathevan J.J."/>
            <person name="Khouri H."/>
            <person name="Utterback T.R."/>
            <person name="Lee C."/>
            <person name="Dimitrov G."/>
            <person name="Jiang L."/>
            <person name="Qin H."/>
            <person name="Weidman J."/>
            <person name="Tran K."/>
            <person name="Kang K.H."/>
            <person name="Hance I.R."/>
            <person name="Nelson K.E."/>
            <person name="Fraser C.M."/>
        </authorList>
    </citation>
    <scope>NUCLEOTIDE SEQUENCE [LARGE SCALE GENOMIC DNA]</scope>
    <source>
        <strain>ATCC 35984 / DSM 28319 / BCRC 17069 / CCUG 31568 / BM 3577 / RP62A</strain>
    </source>
</reference>
<protein>
    <recommendedName>
        <fullName evidence="1">Large ribosomal subunit protein uL6</fullName>
    </recommendedName>
    <alternativeName>
        <fullName evidence="2">50S ribosomal protein L6</fullName>
    </alternativeName>
</protein>